<reference key="1">
    <citation type="journal article" date="1996" name="Acta Trop.">
        <title>During canine leishmaniasis a protein belonging to the 83-kDa heat-shock protein family elicits a strong humoral response.</title>
        <authorList>
            <person name="Angel S.O."/>
            <person name="Requena J.M."/>
            <person name="Soto M."/>
            <person name="Criado D."/>
            <person name="Alonso C."/>
        </authorList>
    </citation>
    <scope>NUCLEOTIDE SEQUENCE [GENOMIC DNA]</scope>
    <source>
        <strain>MHOM/FR/78/LEM 75</strain>
    </source>
</reference>
<reference key="2">
    <citation type="submission" date="2002-04" db="EMBL/GenBank/DDBJ databases">
        <authorList>
            <person name="Requena J.M."/>
        </authorList>
    </citation>
    <scope>SEQUENCE REVISION TO 654</scope>
</reference>
<sequence length="701" mass="80680">MTETFAFQAEINQLMSLIINTFYSNKEIFLRELISNASDACDKIRYQSLTDPSVLGESPRLCIRVVPDKENKTLTVEDNGIGMTKADLVNNLGTIARSGTKAFMEALEAGGDMSMIGQFGVGFYSAYLVADRVTVTSKNNSDESYVWESSACGTFTITSTPESDMKRGTRITLHLKEDQMEYLEPRRLKELIKKHSEFIGYDIELMVEKTTEKEVTDEDEEDTKKADEDEEPKVEEVREGDEGEKKKTKKVKEVTKEYEVQNKHKPLWTRDPKDVTKEEYAAFYKAISNDWEDPRATKHFSVEGQLEFRSIMFVPKRAPFDMFEPNKKRNNIKLYVRRVFIMDNCEDLCPDWLGFVKGVVDSEDLPLNISRENLQQNKILKVIRKNIVKKCLEMFDEVAENKEDYKQFYEQFGKNIKLGIHQDTANRKKLMEFVRFYSSESGEEMTTLKDYVTRMKAGQKSIYYITGDSKKKLESSPFIEQAKRRGLEVLFMTEPIDEYVMQQVKDFEDKKFACLTKEGVHFEESEEEKQQREEEKAACEKLCKTMKEVLGDKVEKVIVSECLSTSPCILVTSEFGWSAHMEQIMRNQALRDSSMAQYMMSKKTMELNPRHPIIKELRRRVDADENDKAVKDLVFLLFDTSLLTSGFQLEDPTGYAERINRMIKLGLSLDEEEEVVAAEATVAETAPAEVTAGTSSMEQVD</sequence>
<name>HSP83_LEIIN</name>
<organism>
    <name type="scientific">Leishmania infantum</name>
    <dbReference type="NCBI Taxonomy" id="5671"/>
    <lineage>
        <taxon>Eukaryota</taxon>
        <taxon>Discoba</taxon>
        <taxon>Euglenozoa</taxon>
        <taxon>Kinetoplastea</taxon>
        <taxon>Metakinetoplastina</taxon>
        <taxon>Trypanosomatida</taxon>
        <taxon>Trypanosomatidae</taxon>
        <taxon>Leishmaniinae</taxon>
        <taxon>Leishmania</taxon>
    </lineage>
</organism>
<gene>
    <name type="primary">HSP83-1</name>
</gene>
<protein>
    <recommendedName>
        <fullName>Heat shock protein 83-1</fullName>
        <shortName>HSP 83</shortName>
    </recommendedName>
</protein>
<accession>Q25293</accession>
<dbReference type="EMBL" id="X87770">
    <property type="protein sequence ID" value="CAD30506.1"/>
    <property type="molecule type" value="Genomic_DNA"/>
</dbReference>
<dbReference type="SMR" id="Q25293"/>
<dbReference type="VEuPathDB" id="TriTrypDB:LINF_330009000"/>
<dbReference type="VEuPathDB" id="TriTrypDB:LINF_330009700"/>
<dbReference type="eggNOG" id="KOG0019">
    <property type="taxonomic scope" value="Eukaryota"/>
</dbReference>
<dbReference type="GO" id="GO:0005737">
    <property type="term" value="C:cytoplasm"/>
    <property type="evidence" value="ECO:0007669"/>
    <property type="project" value="UniProtKB-SubCell"/>
</dbReference>
<dbReference type="GO" id="GO:0005524">
    <property type="term" value="F:ATP binding"/>
    <property type="evidence" value="ECO:0007669"/>
    <property type="project" value="UniProtKB-KW"/>
</dbReference>
<dbReference type="GO" id="GO:0016887">
    <property type="term" value="F:ATP hydrolysis activity"/>
    <property type="evidence" value="ECO:0007669"/>
    <property type="project" value="InterPro"/>
</dbReference>
<dbReference type="GO" id="GO:0140662">
    <property type="term" value="F:ATP-dependent protein folding chaperone"/>
    <property type="evidence" value="ECO:0007669"/>
    <property type="project" value="InterPro"/>
</dbReference>
<dbReference type="GO" id="GO:0051082">
    <property type="term" value="F:unfolded protein binding"/>
    <property type="evidence" value="ECO:0007669"/>
    <property type="project" value="InterPro"/>
</dbReference>
<dbReference type="CDD" id="cd16927">
    <property type="entry name" value="HATPase_Hsp90-like"/>
    <property type="match status" value="1"/>
</dbReference>
<dbReference type="FunFam" id="1.20.120.790:FF:000001">
    <property type="entry name" value="Heat shock protein 90 alpha"/>
    <property type="match status" value="1"/>
</dbReference>
<dbReference type="FunFam" id="3.30.230.80:FF:000001">
    <property type="entry name" value="Heat shock protein 90 alpha"/>
    <property type="match status" value="1"/>
</dbReference>
<dbReference type="FunFam" id="3.40.50.11260:FF:000001">
    <property type="entry name" value="Heat shock protein 90 alpha"/>
    <property type="match status" value="1"/>
</dbReference>
<dbReference type="FunFam" id="3.30.565.10:FF:000001">
    <property type="entry name" value="Heat shock protein HSP 90-alpha"/>
    <property type="match status" value="1"/>
</dbReference>
<dbReference type="Gene3D" id="3.30.230.80">
    <property type="match status" value="1"/>
</dbReference>
<dbReference type="Gene3D" id="3.40.50.11260">
    <property type="match status" value="1"/>
</dbReference>
<dbReference type="Gene3D" id="1.20.120.790">
    <property type="entry name" value="Heat shock protein 90, C-terminal domain"/>
    <property type="match status" value="1"/>
</dbReference>
<dbReference type="Gene3D" id="3.30.565.10">
    <property type="entry name" value="Histidine kinase-like ATPase, C-terminal domain"/>
    <property type="match status" value="1"/>
</dbReference>
<dbReference type="HAMAP" id="MF_00505">
    <property type="entry name" value="HSP90"/>
    <property type="match status" value="1"/>
</dbReference>
<dbReference type="InterPro" id="IPR036890">
    <property type="entry name" value="HATPase_C_sf"/>
</dbReference>
<dbReference type="InterPro" id="IPR019805">
    <property type="entry name" value="Heat_shock_protein_90_CS"/>
</dbReference>
<dbReference type="InterPro" id="IPR037196">
    <property type="entry name" value="HSP90_C"/>
</dbReference>
<dbReference type="InterPro" id="IPR001404">
    <property type="entry name" value="Hsp90_fam"/>
</dbReference>
<dbReference type="InterPro" id="IPR020575">
    <property type="entry name" value="Hsp90_N"/>
</dbReference>
<dbReference type="InterPro" id="IPR020568">
    <property type="entry name" value="Ribosomal_Su5_D2-typ_SF"/>
</dbReference>
<dbReference type="NCBIfam" id="NF003555">
    <property type="entry name" value="PRK05218.1"/>
    <property type="match status" value="1"/>
</dbReference>
<dbReference type="PANTHER" id="PTHR11528">
    <property type="entry name" value="HEAT SHOCK PROTEIN 90 FAMILY MEMBER"/>
    <property type="match status" value="1"/>
</dbReference>
<dbReference type="Pfam" id="PF13589">
    <property type="entry name" value="HATPase_c_3"/>
    <property type="match status" value="1"/>
</dbReference>
<dbReference type="Pfam" id="PF00183">
    <property type="entry name" value="HSP90"/>
    <property type="match status" value="1"/>
</dbReference>
<dbReference type="PIRSF" id="PIRSF002583">
    <property type="entry name" value="Hsp90"/>
    <property type="match status" value="1"/>
</dbReference>
<dbReference type="PRINTS" id="PR00775">
    <property type="entry name" value="HEATSHOCK90"/>
</dbReference>
<dbReference type="SMART" id="SM00387">
    <property type="entry name" value="HATPase_c"/>
    <property type="match status" value="1"/>
</dbReference>
<dbReference type="SUPFAM" id="SSF55874">
    <property type="entry name" value="ATPase domain of HSP90 chaperone/DNA topoisomerase II/histidine kinase"/>
    <property type="match status" value="1"/>
</dbReference>
<dbReference type="SUPFAM" id="SSF110942">
    <property type="entry name" value="HSP90 C-terminal domain"/>
    <property type="match status" value="1"/>
</dbReference>
<dbReference type="SUPFAM" id="SSF54211">
    <property type="entry name" value="Ribosomal protein S5 domain 2-like"/>
    <property type="match status" value="1"/>
</dbReference>
<dbReference type="PROSITE" id="PS00298">
    <property type="entry name" value="HSP90"/>
    <property type="match status" value="1"/>
</dbReference>
<feature type="chain" id="PRO_0000062941" description="Heat shock protein 83-1">
    <location>
        <begin position="1"/>
        <end position="701"/>
    </location>
</feature>
<feature type="region of interest" description="Disordered" evidence="2">
    <location>
        <begin position="210"/>
        <end position="250"/>
    </location>
</feature>
<feature type="short sequence motif" description="TPR repeat-binding">
    <location>
        <begin position="697"/>
        <end position="701"/>
    </location>
</feature>
<feature type="compositionally biased region" description="Acidic residues" evidence="2">
    <location>
        <begin position="228"/>
        <end position="242"/>
    </location>
</feature>
<feature type="binding site" evidence="1">
    <location>
        <position position="36"/>
    </location>
    <ligand>
        <name>ATP</name>
        <dbReference type="ChEBI" id="CHEBI:30616"/>
    </ligand>
</feature>
<feature type="binding site" evidence="1">
    <location>
        <position position="78"/>
    </location>
    <ligand>
        <name>ATP</name>
        <dbReference type="ChEBI" id="CHEBI:30616"/>
    </ligand>
</feature>
<feature type="binding site" evidence="1">
    <location>
        <position position="123"/>
    </location>
    <ligand>
        <name>ATP</name>
        <dbReference type="ChEBI" id="CHEBI:30616"/>
    </ligand>
</feature>
<feature type="binding site" evidence="1">
    <location>
        <position position="371"/>
    </location>
    <ligand>
        <name>ATP</name>
        <dbReference type="ChEBI" id="CHEBI:30616"/>
    </ligand>
</feature>
<proteinExistence type="inferred from homology"/>
<keyword id="KW-0067">ATP-binding</keyword>
<keyword id="KW-0143">Chaperone</keyword>
<keyword id="KW-0963">Cytoplasm</keyword>
<keyword id="KW-0547">Nucleotide-binding</keyword>
<keyword id="KW-0346">Stress response</keyword>
<evidence type="ECO:0000250" key="1"/>
<evidence type="ECO:0000256" key="2">
    <source>
        <dbReference type="SAM" id="MobiDB-lite"/>
    </source>
</evidence>
<evidence type="ECO:0000305" key="3"/>
<comment type="function">
    <text evidence="1">Molecular chaperone that promotes the maturation, structural maintenance and proper regulation of specific target proteins involved for instance in cell cycle control and signal transduction. Undergoes a functional cycle that is linked to its ATPase activity. This cycle probably induces conformational changes in the client proteins, thereby causing their activation. Interacts dynamically with various co-chaperones that modulate its substrate recognition, ATPase cycle and chaperone function (By similarity).</text>
</comment>
<comment type="subunit">
    <text evidence="1">Homodimer.</text>
</comment>
<comment type="subcellular location">
    <subcellularLocation>
        <location evidence="1">Cytoplasm</location>
    </subcellularLocation>
</comment>
<comment type="domain">
    <text evidence="1">The TPR repeat-binding motif mediates interaction with TPR repeat-containing proteins.</text>
</comment>
<comment type="similarity">
    <text evidence="3">Belongs to the heat shock protein 90 family.</text>
</comment>